<proteinExistence type="inferred from homology"/>
<protein>
    <recommendedName>
        <fullName evidence="1">tRNA (guanine-N(1)-)-methyltransferase</fullName>
        <ecNumber evidence="1">2.1.1.228</ecNumber>
    </recommendedName>
    <alternativeName>
        <fullName evidence="1">M1G-methyltransferase</fullName>
    </alternativeName>
    <alternativeName>
        <fullName evidence="1">tRNA [GM37] methyltransferase</fullName>
    </alternativeName>
</protein>
<sequence>MKFSFVSLFPNLMEFYFKDSILARAKEKKLFKLNFYNPRDFSKNSYHKVDDYKIGGGAGLLIQAEPMYEVLRSIQEKKENPYFIFLNPSGKTFNQKDAKRLSKKEHIVFVCGRYEGIDERVLEIFANEVFSIGDFILTGGELPALVMCDAILRNVNGVLGNMESLEEESFENNLFEAPAFSKPFIFEKKNKKFYTPSEFLKGNHARIASLKTTLASCKTKFFRPDLFLEHERKK</sequence>
<comment type="function">
    <text evidence="1">Specifically methylates guanosine-37 in various tRNAs.</text>
</comment>
<comment type="catalytic activity">
    <reaction evidence="1">
        <text>guanosine(37) in tRNA + S-adenosyl-L-methionine = N(1)-methylguanosine(37) in tRNA + S-adenosyl-L-homocysteine + H(+)</text>
        <dbReference type="Rhea" id="RHEA:36899"/>
        <dbReference type="Rhea" id="RHEA-COMP:10145"/>
        <dbReference type="Rhea" id="RHEA-COMP:10147"/>
        <dbReference type="ChEBI" id="CHEBI:15378"/>
        <dbReference type="ChEBI" id="CHEBI:57856"/>
        <dbReference type="ChEBI" id="CHEBI:59789"/>
        <dbReference type="ChEBI" id="CHEBI:73542"/>
        <dbReference type="ChEBI" id="CHEBI:74269"/>
        <dbReference type="EC" id="2.1.1.228"/>
    </reaction>
</comment>
<comment type="subunit">
    <text evidence="1">Homodimer.</text>
</comment>
<comment type="subcellular location">
    <subcellularLocation>
        <location evidence="1">Cytoplasm</location>
    </subcellularLocation>
</comment>
<comment type="similarity">
    <text evidence="1">Belongs to the RNA methyltransferase TrmD family.</text>
</comment>
<reference key="1">
    <citation type="submission" date="2007-07" db="EMBL/GenBank/DDBJ databases">
        <title>Complete genome sequence of Campylobacter jejuni subsp doylei 269.97 isolated from human blood.</title>
        <authorList>
            <person name="Fouts D.E."/>
            <person name="Mongodin E.F."/>
            <person name="Puiu D."/>
            <person name="Sebastian Y."/>
            <person name="Miller W.G."/>
            <person name="Mandrell R.E."/>
            <person name="Lastovica A.J."/>
            <person name="Nelson K.E."/>
        </authorList>
    </citation>
    <scope>NUCLEOTIDE SEQUENCE [LARGE SCALE GENOMIC DNA]</scope>
    <source>
        <strain>ATCC BAA-1458 / RM4099 / 269.97</strain>
    </source>
</reference>
<keyword id="KW-0963">Cytoplasm</keyword>
<keyword id="KW-0489">Methyltransferase</keyword>
<keyword id="KW-0949">S-adenosyl-L-methionine</keyword>
<keyword id="KW-0808">Transferase</keyword>
<keyword id="KW-0819">tRNA processing</keyword>
<dbReference type="EC" id="2.1.1.228" evidence="1"/>
<dbReference type="EMBL" id="CP000768">
    <property type="protein sequence ID" value="ABS44234.1"/>
    <property type="molecule type" value="Genomic_DNA"/>
</dbReference>
<dbReference type="SMR" id="A7H4B2"/>
<dbReference type="KEGG" id="cjd:JJD26997_1293"/>
<dbReference type="HOGENOM" id="CLU_047363_0_1_7"/>
<dbReference type="Proteomes" id="UP000002302">
    <property type="component" value="Chromosome"/>
</dbReference>
<dbReference type="GO" id="GO:0005829">
    <property type="term" value="C:cytosol"/>
    <property type="evidence" value="ECO:0007669"/>
    <property type="project" value="TreeGrafter"/>
</dbReference>
<dbReference type="GO" id="GO:0052906">
    <property type="term" value="F:tRNA (guanine(37)-N1)-methyltransferase activity"/>
    <property type="evidence" value="ECO:0007669"/>
    <property type="project" value="UniProtKB-UniRule"/>
</dbReference>
<dbReference type="GO" id="GO:0002939">
    <property type="term" value="P:tRNA N1-guanine methylation"/>
    <property type="evidence" value="ECO:0007669"/>
    <property type="project" value="TreeGrafter"/>
</dbReference>
<dbReference type="CDD" id="cd18080">
    <property type="entry name" value="TrmD-like"/>
    <property type="match status" value="1"/>
</dbReference>
<dbReference type="Gene3D" id="3.40.1280.10">
    <property type="match status" value="1"/>
</dbReference>
<dbReference type="Gene3D" id="1.10.1270.20">
    <property type="entry name" value="tRNA(m1g37)methyltransferase, domain 2"/>
    <property type="match status" value="1"/>
</dbReference>
<dbReference type="HAMAP" id="MF_00605">
    <property type="entry name" value="TrmD"/>
    <property type="match status" value="1"/>
</dbReference>
<dbReference type="InterPro" id="IPR029028">
    <property type="entry name" value="Alpha/beta_knot_MTases"/>
</dbReference>
<dbReference type="InterPro" id="IPR023148">
    <property type="entry name" value="tRNA_m1G_MeTrfase_C_sf"/>
</dbReference>
<dbReference type="InterPro" id="IPR002649">
    <property type="entry name" value="tRNA_m1G_MeTrfase_TrmD"/>
</dbReference>
<dbReference type="InterPro" id="IPR029026">
    <property type="entry name" value="tRNA_m1G_MTases_N"/>
</dbReference>
<dbReference type="InterPro" id="IPR016009">
    <property type="entry name" value="tRNA_MeTrfase_TRMD/TRM10"/>
</dbReference>
<dbReference type="NCBIfam" id="NF000648">
    <property type="entry name" value="PRK00026.1"/>
    <property type="match status" value="1"/>
</dbReference>
<dbReference type="NCBIfam" id="TIGR00088">
    <property type="entry name" value="trmD"/>
    <property type="match status" value="1"/>
</dbReference>
<dbReference type="PANTHER" id="PTHR46417">
    <property type="entry name" value="TRNA (GUANINE-N(1)-)-METHYLTRANSFERASE"/>
    <property type="match status" value="1"/>
</dbReference>
<dbReference type="PANTHER" id="PTHR46417:SF1">
    <property type="entry name" value="TRNA (GUANINE-N(1)-)-METHYLTRANSFERASE"/>
    <property type="match status" value="1"/>
</dbReference>
<dbReference type="Pfam" id="PF01746">
    <property type="entry name" value="tRNA_m1G_MT"/>
    <property type="match status" value="1"/>
</dbReference>
<dbReference type="PIRSF" id="PIRSF000386">
    <property type="entry name" value="tRNA_mtase"/>
    <property type="match status" value="1"/>
</dbReference>
<dbReference type="SUPFAM" id="SSF75217">
    <property type="entry name" value="alpha/beta knot"/>
    <property type="match status" value="1"/>
</dbReference>
<feature type="chain" id="PRO_1000006467" description="tRNA (guanine-N(1)-)-methyltransferase">
    <location>
        <begin position="1"/>
        <end position="234"/>
    </location>
</feature>
<feature type="binding site" evidence="1">
    <location>
        <position position="112"/>
    </location>
    <ligand>
        <name>S-adenosyl-L-methionine</name>
        <dbReference type="ChEBI" id="CHEBI:59789"/>
    </ligand>
</feature>
<feature type="binding site" evidence="1">
    <location>
        <begin position="132"/>
        <end position="137"/>
    </location>
    <ligand>
        <name>S-adenosyl-L-methionine</name>
        <dbReference type="ChEBI" id="CHEBI:59789"/>
    </ligand>
</feature>
<accession>A7H4B2</accession>
<evidence type="ECO:0000255" key="1">
    <source>
        <dbReference type="HAMAP-Rule" id="MF_00605"/>
    </source>
</evidence>
<name>TRMD_CAMJD</name>
<gene>
    <name evidence="1" type="primary">trmD</name>
    <name type="ordered locus">JJD26997_1293</name>
</gene>
<organism>
    <name type="scientific">Campylobacter jejuni subsp. doylei (strain ATCC BAA-1458 / RM4099 / 269.97)</name>
    <dbReference type="NCBI Taxonomy" id="360109"/>
    <lineage>
        <taxon>Bacteria</taxon>
        <taxon>Pseudomonadati</taxon>
        <taxon>Campylobacterota</taxon>
        <taxon>Epsilonproteobacteria</taxon>
        <taxon>Campylobacterales</taxon>
        <taxon>Campylobacteraceae</taxon>
        <taxon>Campylobacter</taxon>
    </lineage>
</organism>